<keyword id="KW-0002">3D-structure</keyword>
<keyword id="KW-0106">Calcium</keyword>
<keyword id="KW-0222">Digestion</keyword>
<keyword id="KW-0903">Direct protein sequencing</keyword>
<keyword id="KW-0225">Disease variant</keyword>
<keyword id="KW-1015">Disulfide bond</keyword>
<keyword id="KW-0378">Hydrolase</keyword>
<keyword id="KW-0479">Metal-binding</keyword>
<keyword id="KW-0645">Protease</keyword>
<keyword id="KW-1267">Proteomics identification</keyword>
<keyword id="KW-1185">Reference proteome</keyword>
<keyword id="KW-0964">Secreted</keyword>
<keyword id="KW-0720">Serine protease</keyword>
<keyword id="KW-0732">Signal</keyword>
<keyword id="KW-0765">Sulfation</keyword>
<keyword id="KW-0865">Zymogen</keyword>
<sequence>MNPLLILTFVAAALAAPFDDDDKIVGGYNCEENSVPYQVSLNSGYHFCGGSLINEQWVVSAGHCYKSRIQVRLGEHNIEVLEGNEQFINAAKIIRHPQYDRKTLNNDIMLIKLSSRAVINARVSTISLPTAPPATGTKCLISGWGNTASSGADYPDELQCLDAPVLSQAKCEASYPGKITSNMFCVGFLEGGKDSCQGDSGGPVVCNGQLQGVVSWGDGCAQKNKPGVYTKVYNYVKWIKNTIAANS</sequence>
<feature type="signal peptide" evidence="16 17">
    <location>
        <begin position="1"/>
        <end position="15"/>
    </location>
</feature>
<feature type="propeptide" id="PRO_0000028197" description="Activation peptide">
    <location>
        <begin position="16"/>
        <end position="23"/>
    </location>
</feature>
<feature type="chain" id="PRO_0000028198" description="Serine protease 1">
    <location>
        <begin position="24"/>
        <end position="247"/>
    </location>
</feature>
<feature type="chain" id="PRO_0000313570" description="Alpha-trypsin chain 1">
    <location>
        <begin position="24"/>
        <end position="122"/>
    </location>
</feature>
<feature type="chain" id="PRO_0000313571" description="Alpha-trypsin chain 2">
    <location>
        <begin position="123"/>
        <end position="247"/>
    </location>
</feature>
<feature type="domain" description="Peptidase S1" evidence="3">
    <location>
        <begin position="24"/>
        <end position="244"/>
    </location>
</feature>
<feature type="active site" description="Charge relay system">
    <location>
        <position position="63"/>
    </location>
</feature>
<feature type="active site" description="Charge relay system">
    <location>
        <position position="107"/>
    </location>
</feature>
<feature type="active site" description="Charge relay system">
    <location>
        <position position="200"/>
    </location>
</feature>
<feature type="binding site">
    <location>
        <position position="75"/>
    </location>
    <ligand>
        <name>Ca(2+)</name>
        <dbReference type="ChEBI" id="CHEBI:29108"/>
    </ligand>
</feature>
<feature type="binding site">
    <location>
        <position position="77"/>
    </location>
    <ligand>
        <name>Ca(2+)</name>
        <dbReference type="ChEBI" id="CHEBI:29108"/>
    </ligand>
</feature>
<feature type="binding site">
    <location>
        <position position="80"/>
    </location>
    <ligand>
        <name>Ca(2+)</name>
        <dbReference type="ChEBI" id="CHEBI:29108"/>
    </ligand>
</feature>
<feature type="binding site">
    <location>
        <position position="85"/>
    </location>
    <ligand>
        <name>Ca(2+)</name>
        <dbReference type="ChEBI" id="CHEBI:29108"/>
    </ligand>
</feature>
<feature type="site" description="Required for specificity" evidence="1">
    <location>
        <position position="194"/>
    </location>
</feature>
<feature type="modified residue" description="Sulfotyrosine" evidence="23 24">
    <location>
        <position position="154"/>
    </location>
</feature>
<feature type="disulfide bond">
    <location>
        <begin position="30"/>
        <end position="160"/>
    </location>
</feature>
<feature type="disulfide bond">
    <location>
        <begin position="48"/>
        <end position="64"/>
    </location>
</feature>
<feature type="disulfide bond">
    <location>
        <begin position="139"/>
        <end position="206"/>
    </location>
</feature>
<feature type="disulfide bond">
    <location>
        <begin position="171"/>
        <end position="185"/>
    </location>
</feature>
<feature type="disulfide bond">
    <location>
        <begin position="196"/>
        <end position="220"/>
    </location>
</feature>
<feature type="sequence variant" id="VAR_011693" description="In PCTT; disrupts signal sequence cleavage site; dbSNP:rs202003805." evidence="5">
    <original>A</original>
    <variation>V</variation>
    <location>
        <position position="16"/>
    </location>
</feature>
<feature type="sequence variant" id="VAR_011652" description="In PCTT; increased rate of activation; dbSNP:rs397507442." evidence="6">
    <original>D</original>
    <variation>G</variation>
    <location>
        <position position="22"/>
    </location>
</feature>
<feature type="sequence variant" id="VAR_011653" description="In PCTT; increased rate of activation; dbSNP:rs111033567." evidence="4">
    <original>K</original>
    <variation>R</variation>
    <location>
        <position position="23"/>
    </location>
</feature>
<feature type="sequence variant" id="VAR_006720" description="In PCTT; dbSNP:rs111033566." evidence="10 12 20 21">
    <original>N</original>
    <variation>I</variation>
    <location>
        <position position="29"/>
    </location>
</feature>
<feature type="sequence variant" id="VAR_012712" description="In PCTT; dbSNP:rs111033566." evidence="9">
    <original>N</original>
    <variation>T</variation>
    <location>
        <position position="29"/>
    </location>
</feature>
<feature type="sequence variant" id="VAR_037908" description="In PCTT; associated with Ile-29; the double mutant shows increased autocatalytic activation which is solely due to the Ile-29 mutation; dbSNP:rs144422014." evidence="12">
    <original>N</original>
    <variation>S</variation>
    <location>
        <position position="54"/>
    </location>
</feature>
<feature type="sequence variant" id="VAR_037909" description="In PCTT; Lys-79 trypsin activates anionic trypsinogen PRSS2 2-fold while the common pancreatitis-associated mutants His-122 or Ile-29 have no such effect; dbSNP:rs111033564." evidence="11">
    <original>E</original>
    <variation>K</variation>
    <location>
        <position position="79"/>
    </location>
</feature>
<feature type="sequence variant" id="VAR_011654" description="In PCTT; dbSNP:rs1554499091." evidence="10">
    <original>L</original>
    <variation>P</variation>
    <location>
        <position position="104"/>
    </location>
</feature>
<feature type="sequence variant" id="VAR_011655" description="In PCTT; dbSNP:rs387906698." evidence="10">
    <original>R</original>
    <variation>C</variation>
    <location>
        <position position="116"/>
    </location>
</feature>
<feature type="sequence variant" id="VAR_012713" description="In PCTT; suppresses an autocleavage site; dbSNP:rs111033568." evidence="9">
    <original>R</original>
    <variation>C</variation>
    <location>
        <position position="122"/>
    </location>
</feature>
<feature type="sequence variant" id="VAR_006721" description="In PCTT; suppresses an autocleavage site which is probably part of a fail-safe mechanism by which trypsin, which is activated within the pancreas, may be inactivated; loss of this cleavage site would permit autodigestion resulting in pancreatitis; dbSNP:rs267606982." evidence="5 8 10 19 20">
    <original>R</original>
    <variation>H</variation>
    <location>
        <position position="122"/>
    </location>
</feature>
<feature type="sequence variant" id="VAR_036299" description="In a colorectal cancer sample; somatic mutation; dbSNP:rs117497341." evidence="13">
    <original>T</original>
    <variation>M</variation>
    <location>
        <position position="137"/>
    </location>
</feature>
<feature type="sequence variant" id="VAR_011656" description="In PCTT." evidence="10">
    <original>C</original>
    <variation>F</variation>
    <location>
        <position position="139"/>
    </location>
</feature>
<feature type="mutagenesis site" description="Lack of sulfation." evidence="14">
    <original>Y</original>
    <variation>F</variation>
    <location>
        <position position="154"/>
    </location>
</feature>
<feature type="sequence conflict" description="In Ref. 7; AAI28227." evidence="22" ref="7">
    <original>L</original>
    <variation>F</variation>
    <location>
        <position position="4"/>
    </location>
</feature>
<feature type="strand" evidence="28">
    <location>
        <begin position="38"/>
        <end position="54"/>
    </location>
</feature>
<feature type="strand" evidence="28">
    <location>
        <begin position="57"/>
        <end position="60"/>
    </location>
</feature>
<feature type="helix" evidence="28">
    <location>
        <begin position="62"/>
        <end position="64"/>
    </location>
</feature>
<feature type="strand" evidence="28">
    <location>
        <begin position="70"/>
        <end position="74"/>
    </location>
</feature>
<feature type="strand" evidence="29">
    <location>
        <begin position="76"/>
        <end position="80"/>
    </location>
</feature>
<feature type="strand" evidence="28">
    <location>
        <begin position="86"/>
        <end position="95"/>
    </location>
</feature>
<feature type="turn" evidence="28">
    <location>
        <begin position="101"/>
        <end position="103"/>
    </location>
</feature>
<feature type="strand" evidence="28">
    <location>
        <begin position="109"/>
        <end position="115"/>
    </location>
</feature>
<feature type="strand" evidence="28">
    <location>
        <begin position="120"/>
        <end position="122"/>
    </location>
</feature>
<feature type="strand" evidence="28">
    <location>
        <begin position="138"/>
        <end position="144"/>
    </location>
</feature>
<feature type="strand" evidence="28">
    <location>
        <begin position="149"/>
        <end position="151"/>
    </location>
</feature>
<feature type="strand" evidence="28">
    <location>
        <begin position="159"/>
        <end position="165"/>
    </location>
</feature>
<feature type="helix" evidence="28">
    <location>
        <begin position="168"/>
        <end position="174"/>
    </location>
</feature>
<feature type="turn" evidence="28">
    <location>
        <begin position="176"/>
        <end position="178"/>
    </location>
</feature>
<feature type="strand" evidence="28">
    <location>
        <begin position="183"/>
        <end position="187"/>
    </location>
</feature>
<feature type="strand" evidence="27">
    <location>
        <begin position="192"/>
        <end position="194"/>
    </location>
</feature>
<feature type="strand" evidence="28">
    <location>
        <begin position="203"/>
        <end position="206"/>
    </location>
</feature>
<feature type="strand" evidence="28">
    <location>
        <begin position="209"/>
        <end position="216"/>
    </location>
</feature>
<feature type="strand" evidence="28">
    <location>
        <begin position="218"/>
        <end position="222"/>
    </location>
</feature>
<feature type="strand" evidence="28">
    <location>
        <begin position="227"/>
        <end position="231"/>
    </location>
</feature>
<feature type="helix" evidence="28">
    <location>
        <begin position="232"/>
        <end position="235"/>
    </location>
</feature>
<feature type="helix" evidence="28">
    <location>
        <begin position="236"/>
        <end position="245"/>
    </location>
</feature>
<proteinExistence type="evidence at protein level"/>
<protein>
    <recommendedName>
        <fullName evidence="26">Serine protease 1</fullName>
        <ecNumber>3.4.21.4</ecNumber>
    </recommendedName>
    <alternativeName>
        <fullName evidence="2">Anionic trypsin I</fullName>
    </alternativeName>
    <alternativeName>
        <fullName evidence="2">Anionic trypsin-I</fullName>
    </alternativeName>
    <alternativeName>
        <fullName>Beta-trypsin</fullName>
    </alternativeName>
    <alternativeName>
        <fullName>Cationic trypsinogen</fullName>
    </alternativeName>
    <alternativeName>
        <fullName evidence="2">Pretrypsinogen I</fullName>
    </alternativeName>
    <alternativeName>
        <fullName evidence="26">Trypsin I</fullName>
    </alternativeName>
    <alternativeName>
        <fullName>Trypsin-1</fullName>
    </alternativeName>
    <component>
        <recommendedName>
            <fullName>Alpha-trypsin chain 1</fullName>
        </recommendedName>
    </component>
    <component>
        <recommendedName>
            <fullName>Alpha-trypsin chain 2</fullName>
        </recommendedName>
    </component>
</protein>
<accession>P07477</accession>
<accession>A1A509</accession>
<accession>A6NJ71</accession>
<accession>B2R5I5</accession>
<accession>Q5NV57</accession>
<accession>Q7M4N3</accession>
<accession>Q7M4N4</accession>
<accession>Q92955</accession>
<accession>Q9HAN4</accession>
<accession>Q9HAN5</accession>
<accession>Q9HAN6</accession>
<accession>Q9HAN7</accession>
<dbReference type="EC" id="3.4.21.4"/>
<dbReference type="EMBL" id="M22612">
    <property type="protein sequence ID" value="AAA61231.1"/>
    <property type="molecule type" value="mRNA"/>
</dbReference>
<dbReference type="EMBL" id="L36092">
    <property type="protein sequence ID" value="AAC80207.1"/>
    <property type="molecule type" value="Genomic_DNA"/>
</dbReference>
<dbReference type="EMBL" id="AK312199">
    <property type="protein sequence ID" value="BAG35132.1"/>
    <property type="molecule type" value="mRNA"/>
</dbReference>
<dbReference type="EMBL" id="AC231380">
    <property type="status" value="NOT_ANNOTATED_CDS"/>
    <property type="molecule type" value="Genomic_DNA"/>
</dbReference>
<dbReference type="EMBL" id="CH236959">
    <property type="protein sequence ID" value="EAL23773.1"/>
    <property type="molecule type" value="Genomic_DNA"/>
</dbReference>
<dbReference type="EMBL" id="CH471198">
    <property type="protein sequence ID" value="EAW51925.1"/>
    <property type="molecule type" value="Genomic_DNA"/>
</dbReference>
<dbReference type="EMBL" id="BC128226">
    <property type="protein sequence ID" value="AAI28227.1"/>
    <property type="molecule type" value="mRNA"/>
</dbReference>
<dbReference type="EMBL" id="AF314534">
    <property type="protein sequence ID" value="AAG30943.1"/>
    <property type="molecule type" value="Genomic_DNA"/>
</dbReference>
<dbReference type="EMBL" id="U70137">
    <property type="protein sequence ID" value="AAC50728.1"/>
    <property type="molecule type" value="Genomic_DNA"/>
</dbReference>
<dbReference type="EMBL" id="AF315309">
    <property type="protein sequence ID" value="AAG30947.1"/>
    <property type="molecule type" value="Genomic_DNA"/>
</dbReference>
<dbReference type="EMBL" id="AF315310">
    <property type="protein sequence ID" value="AAG30948.1"/>
    <property type="molecule type" value="Genomic_DNA"/>
</dbReference>
<dbReference type="EMBL" id="AF315311">
    <property type="protein sequence ID" value="AAG30949.1"/>
    <property type="molecule type" value="Genomic_DNA"/>
</dbReference>
<dbReference type="CCDS" id="CCDS5872.1"/>
<dbReference type="PIR" id="A25852">
    <property type="entry name" value="A25852"/>
</dbReference>
<dbReference type="PIR" id="S50020">
    <property type="entry name" value="S50020"/>
</dbReference>
<dbReference type="PIR" id="S50021">
    <property type="entry name" value="S50021"/>
</dbReference>
<dbReference type="RefSeq" id="NP_002760.1">
    <property type="nucleotide sequence ID" value="NM_002769.5"/>
</dbReference>
<dbReference type="PDB" id="1FXY">
    <property type="method" value="X-ray"/>
    <property type="resolution" value="2.15 A"/>
    <property type="chains" value="A=127-247"/>
</dbReference>
<dbReference type="PDB" id="1TRN">
    <property type="method" value="X-ray"/>
    <property type="resolution" value="2.20 A"/>
    <property type="chains" value="A/B=24-247"/>
</dbReference>
<dbReference type="PDB" id="2RA3">
    <property type="method" value="X-ray"/>
    <property type="resolution" value="1.46 A"/>
    <property type="chains" value="A/B=24-247"/>
</dbReference>
<dbReference type="PDB" id="4WWY">
    <property type="method" value="X-ray"/>
    <property type="resolution" value="1.70 A"/>
    <property type="chains" value="A/B=24-247"/>
</dbReference>
<dbReference type="PDB" id="4WXV">
    <property type="method" value="X-ray"/>
    <property type="resolution" value="2.10 A"/>
    <property type="chains" value="A/B=24-247"/>
</dbReference>
<dbReference type="PDB" id="7QE8">
    <property type="method" value="X-ray"/>
    <property type="resolution" value="2.90 A"/>
    <property type="chains" value="A/B=24-247"/>
</dbReference>
<dbReference type="PDB" id="7QE9">
    <property type="method" value="X-ray"/>
    <property type="resolution" value="2.10 A"/>
    <property type="chains" value="A/B=24-247"/>
</dbReference>
<dbReference type="PDB" id="8H3S">
    <property type="method" value="EM"/>
    <property type="resolution" value="4.90 A"/>
    <property type="chains" value="C=16-247"/>
</dbReference>
<dbReference type="PDBsum" id="1FXY"/>
<dbReference type="PDBsum" id="1TRN"/>
<dbReference type="PDBsum" id="2RA3"/>
<dbReference type="PDBsum" id="4WWY"/>
<dbReference type="PDBsum" id="4WXV"/>
<dbReference type="PDBsum" id="7QE8"/>
<dbReference type="PDBsum" id="7QE9"/>
<dbReference type="PDBsum" id="8H3S"/>
<dbReference type="SMR" id="P07477"/>
<dbReference type="BioGRID" id="111626">
    <property type="interactions" value="84"/>
</dbReference>
<dbReference type="FunCoup" id="P07477">
    <property type="interactions" value="648"/>
</dbReference>
<dbReference type="IntAct" id="P07477">
    <property type="interactions" value="23"/>
</dbReference>
<dbReference type="MINT" id="P07477"/>
<dbReference type="STRING" id="9606.ENSP00000308720"/>
<dbReference type="BindingDB" id="P07477"/>
<dbReference type="ChEMBL" id="CHEMBL209"/>
<dbReference type="DrugBank" id="DB02665">
    <property type="generic name" value="(1R,2S)-2-Phenylcyclopropanaminium"/>
</dbReference>
<dbReference type="DrugBank" id="DB03417">
    <property type="generic name" value="(2S,3R)-2-[[4-(Tert-butylcarbamoyl)piperazine-1-carbonyl]amino]-6-(diaminomethylideneamino)-3-formylhexanoic acid"/>
</dbReference>
<dbReference type="DrugBank" id="DB06850">
    <property type="generic name" value="(S)-N-(4-carbamimidoylbenzyl)-1-(2-(cyclohexylamino)ethanoyl)pyrrolidine-2-carboxamide"/>
</dbReference>
<dbReference type="DrugBank" id="DB07091">
    <property type="generic name" value="(S)-N-(4-carbamimidoylbenzyl)-1-(2-(cyclohexyloxy)ethanoyl)pyrrolidine-2-carboxamide"/>
</dbReference>
<dbReference type="DrugBank" id="DB06845">
    <property type="generic name" value="(S)-N-(4-carbamimidoylbenzyl)-1-(2-(cyclopentylamino)ethanoyl)pyrrolidine-2-carboxamide"/>
</dbReference>
<dbReference type="DrugBank" id="DB07088">
    <property type="generic name" value="(S)-N-(4-carbamimidoylbenzyl)-1-(2-(cyclopentyloxy)ethanoyl)pyrrolidine-2-carboxamide"/>
</dbReference>
<dbReference type="DrugBank" id="DB07131">
    <property type="generic name" value="(S)-N-(4-carbamimidoylbenzyl)-1-(3-cyclohexylpropanoyl)pyrrolidine-2-carboxamide"/>
</dbReference>
<dbReference type="DrugBank" id="DB07095">
    <property type="generic name" value="(S)-N-(4-carbamimidoylbenzyl)-1-(3-cyclopentylpropanoyl)pyrrolidine-2-carboxamide"/>
</dbReference>
<dbReference type="DrugBank" id="DB04793">
    <property type="generic name" value="1,4:3,6-Dianhydro-2-O-(3-carbamimidoylphenyl)-5-O-(4-carbamimidoylphenyl)-D-glucitol"/>
</dbReference>
<dbReference type="DrugBank" id="DB03337">
    <property type="generic name" value="1-(2-Amidinophenyl)-3-(Phenoxyphenyl)Urea"/>
</dbReference>
<dbReference type="DrugBank" id="DB04336">
    <property type="generic name" value="1-(4-Amidinophenyl)-3-(4-Chlorophenyl)Urea"/>
</dbReference>
<dbReference type="DrugBank" id="DB08420">
    <property type="generic name" value="1-{[1-(2-AMINO-3-PHENYL-PROPIONYL)-PYRROLIDINE-2-CARBONYL]-AMINO}-2-(3-CYANO-PHENYL)-ETHANEBORONIC ACID"/>
</dbReference>
<dbReference type="DrugBank" id="DB04790">
    <property type="generic name" value="2,5-bis-O-{3-[amino(imino)methyl]phenyl}-1,4:3,6-dianhydro-D-glucitol"/>
</dbReference>
<dbReference type="DrugBank" id="DB04792">
    <property type="generic name" value="2,5-O,O-BIS-{4',4''-AMIDINOPHENYL}-1,4:3,6-DIANHYDRO-D-SORBITOL"/>
</dbReference>
<dbReference type="DrugBank" id="DB01905">
    <property type="generic name" value="2-(2-Hydroxy-5-Methoxy-Phenyl)-1h-Benzoimidazole-5-Carboxamidine"/>
</dbReference>
<dbReference type="DrugBank" id="DB02463">
    <property type="generic name" value="2-(2-Hydroxy-Phenyl)-1h-Indole-5-Carboxamidine"/>
</dbReference>
<dbReference type="DrugBank" id="DB02287">
    <property type="generic name" value="2-(2-hydroxy-phenyl)-3H-benzoimidazole-5-carboxamidine"/>
</dbReference>
<dbReference type="DrugBank" id="DB08184">
    <property type="generic name" value="2-(2-METHYLPHENYL)-1H-INDOLE-5-CARBOXIMIDAMIDE"/>
</dbReference>
<dbReference type="DrugBank" id="DB06918">
    <property type="generic name" value="2-(2-METHYLPHENYL)-1H-INDOLE-6-CARBOXIMIDAMIDE"/>
</dbReference>
<dbReference type="DrugBank" id="DB06923">
    <property type="generic name" value="2-(3-METHYLPHENYL)-1H-INDOLE-5-CARBOXIMIDAMIDE"/>
</dbReference>
<dbReference type="DrugBank" id="DB08254">
    <property type="generic name" value="2-Naphthalenesulfonic acid"/>
</dbReference>
<dbReference type="DrugBank" id="DB04791">
    <property type="generic name" value="2-O-(4'-AMIDINOPHENYL)-5-O-(3''-AMIDINOPHENYL)-1,4:3,6-DIANHYDRO-D-SORBITOL"/>
</dbReference>
<dbReference type="DrugBank" id="DB01725">
    <property type="generic name" value="2-{2-hydroxy-[1,1'-biphenyl]-3-yl}-1H-1,3-benzodiazole-5-carboximidamide"/>
</dbReference>
<dbReference type="DrugBank" id="DB01665">
    <property type="generic name" value="2H-Benzimidazol-2-amine"/>
</dbReference>
<dbReference type="DrugBank" id="DB03374">
    <property type="generic name" value="3,5-Diiodotyrosine"/>
</dbReference>
<dbReference type="DrugBank" id="DB04410">
    <property type="generic name" value="3-Phenylpropylamine"/>
</dbReference>
<dbReference type="DrugBank" id="DB07229">
    <property type="generic name" value="3-{5-[AMINO(IMINIO)METHYL]-1H-INDOL-2-YL}-5-METHOXY-1,1'-BIPHENYL-2-OLATE"/>
</dbReference>
<dbReference type="DrugBank" id="DB07368">
    <property type="generic name" value="4-(METHYLSULFONYL)BENZENECARBOXIMIDAMIDE"/>
</dbReference>
<dbReference type="DrugBank" id="DB03243">
    <property type="generic name" value="4-Fluorobenzylamine"/>
</dbReference>
<dbReference type="DrugBank" id="DB03136">
    <property type="generic name" value="4-Iodobenzo[B]Thiophene-2-Carboxamidine"/>
</dbReference>
<dbReference type="DrugBank" id="DB04311">
    <property type="generic name" value="4-Phenylbutylamine"/>
</dbReference>
<dbReference type="DrugBank" id="DB04654">
    <property type="generic name" value="4-PIPERIDIN-4-YLBUTANAL"/>
</dbReference>
<dbReference type="DrugBank" id="DB02354">
    <property type="generic name" value="4-{[1-Methyl-5-(2-Methyl-Benzoimidazol-1-Ylmethyl)-1h-Benzoimidazol-2-Ylmethyl]-Amino}-Benzamidine"/>
</dbReference>
<dbReference type="DrugBank" id="DB01939">
    <property type="generic name" value="5-Amidino-Benzimidazole"/>
</dbReference>
<dbReference type="DrugBank" id="DB07491">
    <property type="generic name" value="5-amino-2,4,6-tribromobenzene-1,3-dicarboxylic acid"/>
</dbReference>
<dbReference type="DrugBank" id="DB03865">
    <property type="generic name" value="6-Chloro-2-(2-Hydroxy-Biphenyl-3-Yl)-1h-Indole-5-Carboxamidine"/>
</dbReference>
<dbReference type="DrugBank" id="DB06855">
    <property type="generic name" value="6-fluoro-2-(2-hydroxy-3-isobutoxy-phenyl)-1H-benzoimidazole-5-carboxamidine"/>
</dbReference>
<dbReference type="DrugBank" id="DB04107">
    <property type="generic name" value="[(1-{2[(4-Carbamimidoyl-Phenylamino)-Methyl]-1-Methyl-1h-Benzoimidazol-5-Yl}-Cyclopropyl)-Pyridin-2-Yl-Methyleneaminooxy]-Acetic Acid Ethyl Ester"/>
</dbReference>
<dbReference type="DrugBank" id="DB01836">
    <property type="generic name" value="[4-(6-Chloro-Naphthalene-2-Sulfonyl)-Piperazin-1-Yl]-(3,4,5,6-Tetrahydro-2h-[1,4']Bipyridinyl-4-Yl)-Methanone"/>
</dbReference>
<dbReference type="DrugBank" id="DB02269">
    <property type="generic name" value="[4-({[5-Benzyloxy-1-(3-Carbamimidoyl-Benzyl)-1h-Indole-2-Carbonyl]-Amino}-Methyl)-Phenyl]-Trimethyl-Ammonium"/>
</dbReference>
<dbReference type="DrugBank" id="DB08763">
    <property type="generic name" value="[N-(BENZYLOXYCARBONYL)AMINO](4-AMIDINOPHENYL)METHANE-PHOSPHONATE"/>
</dbReference>
<dbReference type="DrugBank" id="DB03081">
    <property type="generic name" value="[N-[N-(4-Methoxy-2,3,6-trimethylphenylsulfonyl)-L-aspartyl]-D-(4-amidino-phenylalanyl)]-piperidine"/>
</dbReference>
<dbReference type="DrugBank" id="DB04391">
    <property type="generic name" value="Aeruginosin 98-B"/>
</dbReference>
<dbReference type="DrugBank" id="DB02435">
    <property type="generic name" value="Aminomethylcyclohexane"/>
</dbReference>
<dbReference type="DrugBank" id="DB02045">
    <property type="generic name" value="Amylamine"/>
</dbReference>
<dbReference type="DrugBank" id="DB06692">
    <property type="generic name" value="Aprotinin"/>
</dbReference>
<dbReference type="DrugBank" id="DB03127">
    <property type="generic name" value="Benzamidine"/>
</dbReference>
<dbReference type="DrugBank" id="DB04446">
    <property type="generic name" value="Benzo[B]Thiophene-2-Carboxamidine"/>
</dbReference>
<dbReference type="DrugBank" id="DB02464">
    <property type="generic name" value="Benzylamine"/>
</dbReference>
<dbReference type="DrugBank" id="DB03213">
    <property type="generic name" value="Bis(5-Amidino-2-Benzimidazolyl)Methane Ketone"/>
</dbReference>
<dbReference type="DrugBank" id="DB04301">
    <property type="generic name" value="Bis(5-Amidino-2-Benzimidazolyl)Methane Ketone Hydrate"/>
</dbReference>
<dbReference type="DrugBank" id="DB01876">
    <property type="generic name" value="Bis(5-Amidino-2-Benzimidazolyl)Methanone"/>
</dbReference>
<dbReference type="DrugBank" id="DB01705">
    <property type="generic name" value="Bis(5-Amidino-Benzimidazolyl)Methane"/>
</dbReference>
<dbReference type="DrugBank" id="DB03443">
    <property type="generic name" value="bis(5-amidino-benzimidazolyl)methanone zinc"/>
</dbReference>
<dbReference type="DrugBank" id="DB02081">
    <property type="generic name" value="Bis-Benzamidine"/>
</dbReference>
<dbReference type="DrugBank" id="DB00188">
    <property type="generic name" value="Bortezomib"/>
</dbReference>
<dbReference type="DrugBank" id="DB13729">
    <property type="generic name" value="Camostat"/>
</dbReference>
<dbReference type="DrugBank" id="DB02288">
    <property type="generic name" value="CRA-9334"/>
</dbReference>
<dbReference type="DrugBank" id="DB03173">
    <property type="generic name" value="CRA_10433"/>
</dbReference>
<dbReference type="DrugBank" id="DB02526">
    <property type="generic name" value="CRA_10655"/>
</dbReference>
<dbReference type="DrugBank" id="DB04470">
    <property type="generic name" value="CRA_10656"/>
</dbReference>
<dbReference type="DrugBank" id="DB02366">
    <property type="generic name" value="CRA_10762"/>
</dbReference>
<dbReference type="DrugBank" id="DB02989">
    <property type="generic name" value="CRA_10972"/>
</dbReference>
<dbReference type="DrugBank" id="DB01771">
    <property type="generic name" value="CRA_10991"/>
</dbReference>
<dbReference type="DrugBank" id="DB03555">
    <property type="generic name" value="CRA_11092"/>
</dbReference>
<dbReference type="DrugBank" id="DB03643">
    <property type="generic name" value="CRA_1144"/>
</dbReference>
<dbReference type="DrugBank" id="DB02063">
    <property type="generic name" value="CRA_16847"/>
</dbReference>
<dbReference type="DrugBank" id="DB02084">
    <property type="generic name" value="CRA_17312"/>
</dbReference>
<dbReference type="DrugBank" id="DB01741">
    <property type="generic name" value="CRA_17693"/>
</dbReference>
<dbReference type="DrugBank" id="DB03016">
    <property type="generic name" value="CRA_1801"/>
</dbReference>
<dbReference type="DrugBank" id="DB02875">
    <property type="generic name" value="CRA_1802"/>
</dbReference>
<dbReference type="DrugBank" id="DB04246">
    <property type="generic name" value="CRA_23653"/>
</dbReference>
<dbReference type="DrugBank" id="DB03159">
    <property type="generic name" value="CRA_8696"/>
</dbReference>
<dbReference type="DrugBank" id="DB04215">
    <property type="generic name" value="CRA_9076"/>
</dbReference>
<dbReference type="DrugBank" id="DB04563">
    <property type="generic name" value="CRA_9678"/>
</dbReference>
<dbReference type="DrugBank" id="DB03595">
    <property type="generic name" value="CRA_9785"/>
</dbReference>
<dbReference type="DrugBank" id="DB04269">
    <property type="generic name" value="Cyclotheonamide A"/>
</dbReference>
<dbReference type="DrugBank" id="DB06840">
    <property type="generic name" value="diethyl [(1R)-1,5-diaminopentyl]boronate"/>
</dbReference>
<dbReference type="DrugBank" id="DB03608">
    <property type="generic name" value="Diminazene"/>
</dbReference>
<dbReference type="DrugBank" id="DB12831">
    <property type="generic name" value="Gabexate"/>
</dbReference>
<dbReference type="DrugBank" id="DB01767">
    <property type="generic name" value="Hemi-Babim"/>
</dbReference>
<dbReference type="DrugBank" id="DB04442">
    <property type="generic name" value="Imino[2-(2-oxo-1,2-dihydro-3-pyridinyl)-1H-benzimidazol-5-yl]methanaminium"/>
</dbReference>
<dbReference type="DrugBank" id="DB13616">
    <property type="generic name" value="Melagatran"/>
</dbReference>
<dbReference type="DrugBank" id="DB07985">
    <property type="generic name" value="METHYL 4-(AMINOIMINOMETHYL)-BETA-[3- INH (AMINOIMINO)PHENYL]BENZENE PENTANOATE"/>
</dbReference>
<dbReference type="DrugBank" id="DB01805">
    <property type="generic name" value="Monoisopropylphosphorylserine"/>
</dbReference>
<dbReference type="DrugBank" id="DB04125">
    <property type="generic name" value="N-Alpha-(2-Naphthylsulfonyl)-N(3-Amidino-L-Phenylalaninyl)-4-Acetyl-Piperazine"/>
</dbReference>
<dbReference type="DrugBank" id="DB01745">
    <property type="generic name" value="N-Alpha-(2-Naphthylsulfonyl)-N(3-Amidino-L-Phenylalaninyl)Isopipecolinic Acid Methyl Ester"/>
</dbReference>
<dbReference type="DrugBank" id="DB04238">
    <property type="generic name" value="N-Alpha-(2-Naphthylsulfonyl)-N-(3-Amidino-L-Phenylalaninyl)-D-Pipecolinic Acid"/>
</dbReference>
<dbReference type="DrugBank" id="DB06853">
    <property type="generic name" value="N-cycloheptylglycyl-N-(4-carbamimidoylbenzyl)-L-prolinamide"/>
</dbReference>
<dbReference type="DrugBank" id="DB06858">
    <property type="generic name" value="N-cyclooctylglycyl-N-(4-carbamimidoylbenzyl)-L-prolinamide"/>
</dbReference>
<dbReference type="DrugBank" id="DB12598">
    <property type="generic name" value="Nafamostat"/>
</dbReference>
<dbReference type="DrugBank" id="DB01737">
    <property type="generic name" value="Nalpha-(2-Naphthylsulfonylglycyl)-3-Amidino-D,L-Phenylalanine-Isopropylester"/>
</dbReference>
<dbReference type="DrugBank" id="DB04325">
    <property type="generic name" value="Phenethylamine"/>
</dbReference>
<dbReference type="DrugBank" id="DB03976">
    <property type="generic name" value="Phosphorylisopropane"/>
</dbReference>
<dbReference type="DrugBank" id="DB04424">
    <property type="generic name" value="RPR128515"/>
</dbReference>
<dbReference type="DrugBank" id="DB02744">
    <property type="generic name" value="RPR131247"/>
</dbReference>
<dbReference type="DrugBank" id="DB03251">
    <property type="generic name" value="RWJ-51084"/>
</dbReference>
<dbReference type="DrugBank" id="DB02812">
    <property type="generic name" value="RWJ-56423"/>
</dbReference>
<dbReference type="DrugBank" id="DB03876">
    <property type="generic name" value="Thieno[2,3-B]Pyridine-2-Carboxamidine"/>
</dbReference>
<dbReference type="DrugBank" id="DB04008">
    <property type="generic name" value="Zinc;[amino-[2-[[5-[amino(azaniumylidene)methyl]benzimidazol-1-id-2-yl]methyl]benzimidazol-1-id-5-yl]methylidene]azanium"/>
</dbReference>
<dbReference type="DrugBank" id="DB04432">
    <property type="generic name" value="ZK-805623"/>
</dbReference>
<dbReference type="DrugBank" id="DB02112">
    <property type="generic name" value="Zk-806450"/>
</dbReference>
<dbReference type="DrugBank" id="DB03373">
    <property type="generic name" value="ZK-806711"/>
</dbReference>
<dbReference type="DrugCentral" id="P07477"/>
<dbReference type="GuidetoPHARMACOLOGY" id="2397"/>
<dbReference type="MEROPS" id="S01.127"/>
<dbReference type="GlyGen" id="P07477">
    <property type="glycosylation" value="2 sites, 1 O-linked glycan (2 sites)"/>
</dbReference>
<dbReference type="iPTMnet" id="P07477"/>
<dbReference type="PhosphoSitePlus" id="P07477"/>
<dbReference type="BioMuta" id="PRSS1"/>
<dbReference type="DMDM" id="136408"/>
<dbReference type="jPOST" id="P07477"/>
<dbReference type="MassIVE" id="P07477"/>
<dbReference type="PaxDb" id="9606-ENSP00000308720"/>
<dbReference type="PeptideAtlas" id="P07477"/>
<dbReference type="ProteomicsDB" id="52006"/>
<dbReference type="Antibodypedia" id="18375">
    <property type="antibodies" value="549 antibodies from 37 providers"/>
</dbReference>
<dbReference type="DNASU" id="5644"/>
<dbReference type="Ensembl" id="ENST00000311737.12">
    <property type="protein sequence ID" value="ENSP00000308720.7"/>
    <property type="gene ID" value="ENSG00000204983.15"/>
</dbReference>
<dbReference type="Ensembl" id="ENST00000616256.4">
    <property type="protein sequence ID" value="ENSP00000479217.1"/>
    <property type="gene ID" value="ENSG00000274247.4"/>
</dbReference>
<dbReference type="GeneID" id="5644"/>
<dbReference type="KEGG" id="hsa:5644"/>
<dbReference type="MANE-Select" id="ENST00000311737.12">
    <property type="protein sequence ID" value="ENSP00000308720.7"/>
    <property type="RefSeq nucleotide sequence ID" value="NM_002769.5"/>
    <property type="RefSeq protein sequence ID" value="NP_002760.1"/>
</dbReference>
<dbReference type="UCSC" id="uc003wak.3">
    <property type="organism name" value="human"/>
</dbReference>
<dbReference type="AGR" id="HGNC:9475"/>
<dbReference type="CTD" id="5644"/>
<dbReference type="DisGeNET" id="5644"/>
<dbReference type="GeneCards" id="PRSS1"/>
<dbReference type="GeneReviews" id="PRSS1"/>
<dbReference type="HGNC" id="HGNC:9475">
    <property type="gene designation" value="PRSS1"/>
</dbReference>
<dbReference type="HPA" id="ENSG00000204983">
    <property type="expression patterns" value="Tissue enriched (pancreas)"/>
</dbReference>
<dbReference type="MalaCards" id="PRSS1"/>
<dbReference type="MIM" id="167800">
    <property type="type" value="phenotype"/>
</dbReference>
<dbReference type="MIM" id="276000">
    <property type="type" value="gene"/>
</dbReference>
<dbReference type="neXtProt" id="NX_P07477"/>
<dbReference type="OpenTargets" id="ENSG00000204983"/>
<dbReference type="Orphanet" id="676">
    <property type="disease" value="Hereditary chronic pancreatitis"/>
</dbReference>
<dbReference type="PharmGKB" id="PA33828"/>
<dbReference type="VEuPathDB" id="HostDB:ENSG00000204983"/>
<dbReference type="eggNOG" id="KOG3627">
    <property type="taxonomic scope" value="Eukaryota"/>
</dbReference>
<dbReference type="GeneTree" id="ENSGT01050000244883"/>
<dbReference type="InParanoid" id="P07477"/>
<dbReference type="OrthoDB" id="10059102at2759"/>
<dbReference type="PAN-GO" id="P07477">
    <property type="GO annotations" value="3 GO annotations based on evolutionary models"/>
</dbReference>
<dbReference type="PhylomeDB" id="P07477"/>
<dbReference type="TreeFam" id="TF331065"/>
<dbReference type="PathwayCommons" id="P07477"/>
<dbReference type="Reactome" id="R-HSA-1592389">
    <property type="pathway name" value="Activation of Matrix Metalloproteinases"/>
</dbReference>
<dbReference type="Reactome" id="R-HSA-9758881">
    <property type="pathway name" value="Uptake of dietary cobalamins into enterocytes"/>
</dbReference>
<dbReference type="Reactome" id="R-HSA-9925561">
    <property type="pathway name" value="Developmental Lineage of Pancreatic Acinar Cells"/>
</dbReference>
<dbReference type="SignaLink" id="P07477"/>
<dbReference type="SIGNOR" id="P07477"/>
<dbReference type="BioGRID-ORCS" id="5644">
    <property type="hits" value="12 hits in 1126 CRISPR screens"/>
</dbReference>
<dbReference type="ChiTaRS" id="PRSS1">
    <property type="organism name" value="human"/>
</dbReference>
<dbReference type="EvolutionaryTrace" id="P07477"/>
<dbReference type="GeneWiki" id="Trypsin_1"/>
<dbReference type="GenomeRNAi" id="5644"/>
<dbReference type="Pharos" id="P07477">
    <property type="development level" value="Tclin"/>
</dbReference>
<dbReference type="PRO" id="PR:P07477"/>
<dbReference type="Proteomes" id="UP000005640">
    <property type="component" value="Chromosome 7"/>
</dbReference>
<dbReference type="RNAct" id="P07477">
    <property type="molecule type" value="protein"/>
</dbReference>
<dbReference type="Bgee" id="ENSG00000204983">
    <property type="expression patterns" value="Expressed in body of pancreas and 92 other cell types or tissues"/>
</dbReference>
<dbReference type="ExpressionAtlas" id="P07477">
    <property type="expression patterns" value="baseline and differential"/>
</dbReference>
<dbReference type="GO" id="GO:0072562">
    <property type="term" value="C:blood microparticle"/>
    <property type="evidence" value="ECO:0007005"/>
    <property type="project" value="UniProtKB"/>
</dbReference>
<dbReference type="GO" id="GO:0062023">
    <property type="term" value="C:collagen-containing extracellular matrix"/>
    <property type="evidence" value="ECO:0007005"/>
    <property type="project" value="BHF-UCL"/>
</dbReference>
<dbReference type="GO" id="GO:0005576">
    <property type="term" value="C:extracellular region"/>
    <property type="evidence" value="ECO:0000304"/>
    <property type="project" value="Reactome"/>
</dbReference>
<dbReference type="GO" id="GO:0005615">
    <property type="term" value="C:extracellular space"/>
    <property type="evidence" value="ECO:0000318"/>
    <property type="project" value="GO_Central"/>
</dbReference>
<dbReference type="GO" id="GO:0046872">
    <property type="term" value="F:metal ion binding"/>
    <property type="evidence" value="ECO:0007669"/>
    <property type="project" value="UniProtKB-KW"/>
</dbReference>
<dbReference type="GO" id="GO:0004252">
    <property type="term" value="F:serine-type endopeptidase activity"/>
    <property type="evidence" value="ECO:0000318"/>
    <property type="project" value="GO_Central"/>
</dbReference>
<dbReference type="GO" id="GO:0007586">
    <property type="term" value="P:digestion"/>
    <property type="evidence" value="ECO:0007669"/>
    <property type="project" value="UniProtKB-KW"/>
</dbReference>
<dbReference type="GO" id="GO:0022617">
    <property type="term" value="P:extracellular matrix disassembly"/>
    <property type="evidence" value="ECO:0000304"/>
    <property type="project" value="Reactome"/>
</dbReference>
<dbReference type="GO" id="GO:0006508">
    <property type="term" value="P:proteolysis"/>
    <property type="evidence" value="ECO:0007669"/>
    <property type="project" value="UniProtKB-KW"/>
</dbReference>
<dbReference type="CDD" id="cd00190">
    <property type="entry name" value="Tryp_SPc"/>
    <property type="match status" value="1"/>
</dbReference>
<dbReference type="FunFam" id="2.40.10.10:FF:000019">
    <property type="entry name" value="Anionic trypsin"/>
    <property type="match status" value="1"/>
</dbReference>
<dbReference type="Gene3D" id="2.40.10.10">
    <property type="entry name" value="Trypsin-like serine proteases"/>
    <property type="match status" value="2"/>
</dbReference>
<dbReference type="InterPro" id="IPR009003">
    <property type="entry name" value="Peptidase_S1_PA"/>
</dbReference>
<dbReference type="InterPro" id="IPR043504">
    <property type="entry name" value="Peptidase_S1_PA_chymotrypsin"/>
</dbReference>
<dbReference type="InterPro" id="IPR001314">
    <property type="entry name" value="Peptidase_S1A"/>
</dbReference>
<dbReference type="InterPro" id="IPR050127">
    <property type="entry name" value="Serine_Proteases_S1"/>
</dbReference>
<dbReference type="InterPro" id="IPR001254">
    <property type="entry name" value="Trypsin_dom"/>
</dbReference>
<dbReference type="InterPro" id="IPR018114">
    <property type="entry name" value="TRYPSIN_HIS"/>
</dbReference>
<dbReference type="InterPro" id="IPR033116">
    <property type="entry name" value="TRYPSIN_SER"/>
</dbReference>
<dbReference type="PANTHER" id="PTHR24264:SF73">
    <property type="entry name" value="SERINE PROTEASE 1"/>
    <property type="match status" value="1"/>
</dbReference>
<dbReference type="PANTHER" id="PTHR24264">
    <property type="entry name" value="TRYPSIN-RELATED"/>
    <property type="match status" value="1"/>
</dbReference>
<dbReference type="Pfam" id="PF00089">
    <property type="entry name" value="Trypsin"/>
    <property type="match status" value="1"/>
</dbReference>
<dbReference type="PRINTS" id="PR00722">
    <property type="entry name" value="CHYMOTRYPSIN"/>
</dbReference>
<dbReference type="SMART" id="SM00020">
    <property type="entry name" value="Tryp_SPc"/>
    <property type="match status" value="1"/>
</dbReference>
<dbReference type="SUPFAM" id="SSF50494">
    <property type="entry name" value="Trypsin-like serine proteases"/>
    <property type="match status" value="1"/>
</dbReference>
<dbReference type="PROSITE" id="PS50240">
    <property type="entry name" value="TRYPSIN_DOM"/>
    <property type="match status" value="1"/>
</dbReference>
<dbReference type="PROSITE" id="PS00134">
    <property type="entry name" value="TRYPSIN_HIS"/>
    <property type="match status" value="1"/>
</dbReference>
<dbReference type="PROSITE" id="PS00135">
    <property type="entry name" value="TRYPSIN_SER"/>
    <property type="match status" value="1"/>
</dbReference>
<gene>
    <name evidence="26" type="primary">PRSS1</name>
    <name type="synonym">TRP1</name>
    <name evidence="26" type="synonym">TRY1</name>
    <name type="synonym">TRYP1</name>
</gene>
<name>TRY1_HUMAN</name>
<organism>
    <name type="scientific">Homo sapiens</name>
    <name type="common">Human</name>
    <dbReference type="NCBI Taxonomy" id="9606"/>
    <lineage>
        <taxon>Eukaryota</taxon>
        <taxon>Metazoa</taxon>
        <taxon>Chordata</taxon>
        <taxon>Craniata</taxon>
        <taxon>Vertebrata</taxon>
        <taxon>Euteleostomi</taxon>
        <taxon>Mammalia</taxon>
        <taxon>Eutheria</taxon>
        <taxon>Euarchontoglires</taxon>
        <taxon>Primates</taxon>
        <taxon>Haplorrhini</taxon>
        <taxon>Catarrhini</taxon>
        <taxon>Hominidae</taxon>
        <taxon>Homo</taxon>
    </lineage>
</organism>
<comment type="function">
    <text evidence="17">Has activity against the synthetic substrates Boc-Phe-Ser-Arg-Mec, Boc-Leu-Thr-Arg-Mec, Boc-Gln-Ala-Arg-Mec and Boc-Val-Pro-Arg-Mec. The single-chain form is more active than the two-chain form against all of these substrates.</text>
</comment>
<comment type="catalytic activity">
    <reaction>
        <text>Preferential cleavage: Arg-|-Xaa, Lys-|-Xaa.</text>
        <dbReference type="EC" id="3.4.21.4"/>
    </reaction>
</comment>
<comment type="cofactor">
    <cofactor>
        <name>Ca(2+)</name>
        <dbReference type="ChEBI" id="CHEBI:29108"/>
    </cofactor>
    <text>Binds 1 Ca(2+) ion per subunit.</text>
</comment>
<comment type="subunit">
    <text evidence="7">Interacts with SERPINA1.</text>
</comment>
<comment type="subcellular location">
    <subcellularLocation>
        <location>Secreted</location>
        <location>Extracellular space</location>
    </subcellularLocation>
</comment>
<comment type="PTM">
    <text>Occurs in a single-chain form and a two-chain form, produced by proteolytic cleavage after Arg-122.</text>
</comment>
<comment type="PTM">
    <text evidence="15">Sulfation at Tyr-154 increases selectivity towards basic versus apolar residues at the P2' position of inhibitors that bind in a substrate-like fashion. Although the increase in selectivity is relatively small, it may facilitate digestion of a broader range of dietary proteins.</text>
</comment>
<comment type="mass spectrometry">
    <molecule>Serine protease 1</molecule>
</comment>
<comment type="disease" evidence="4 5 6 8 9 10 11 12 19 20 21">
    <disease id="DI-01731">
        <name>Pancreatitis, hereditary</name>
        <acronym>PCTT</acronym>
        <description>A disease characterized by pancreas inflammation, permanent destruction of the pancreatic parenchyma, maldigestion, and severe abdominal pain attacks.</description>
        <dbReference type="MIM" id="167800"/>
    </disease>
    <text>Disease susceptibility is associated with variants affecting the gene represented in this entry.</text>
</comment>
<comment type="similarity">
    <text evidence="3">Belongs to the peptidase S1 family.</text>
</comment>
<comment type="caution">
    <text evidence="23 25">Tyr-154 was proposed to be phosphorylated (PubMed:8683601) but it has been shown (PubMed:17087724) to be sulfated instead. Phosphate and sulfate groups are similar in mass and size, and this can lead to erroneous interpretation of the results.</text>
</comment>
<evidence type="ECO:0000250" key="1"/>
<evidence type="ECO:0000250" key="2">
    <source>
        <dbReference type="UniProtKB" id="P00762"/>
    </source>
</evidence>
<evidence type="ECO:0000255" key="3">
    <source>
        <dbReference type="PROSITE-ProRule" id="PRU00274"/>
    </source>
</evidence>
<evidence type="ECO:0000269" key="4">
    <source>
    </source>
</evidence>
<evidence type="ECO:0000269" key="5">
    <source>
    </source>
</evidence>
<evidence type="ECO:0000269" key="6">
    <source>
    </source>
</evidence>
<evidence type="ECO:0000269" key="7">
    <source>
    </source>
</evidence>
<evidence type="ECO:0000269" key="8">
    <source>
    </source>
</evidence>
<evidence type="ECO:0000269" key="9">
    <source>
    </source>
</evidence>
<evidence type="ECO:0000269" key="10">
    <source>
    </source>
</evidence>
<evidence type="ECO:0000269" key="11">
    <source>
    </source>
</evidence>
<evidence type="ECO:0000269" key="12">
    <source>
    </source>
</evidence>
<evidence type="ECO:0000269" key="13">
    <source>
    </source>
</evidence>
<evidence type="ECO:0000269" key="14">
    <source>
    </source>
</evidence>
<evidence type="ECO:0000269" key="15">
    <source>
    </source>
</evidence>
<evidence type="ECO:0000269" key="16">
    <source>
    </source>
</evidence>
<evidence type="ECO:0000269" key="17">
    <source>
    </source>
</evidence>
<evidence type="ECO:0000269" key="18">
    <source>
    </source>
</evidence>
<evidence type="ECO:0000269" key="19">
    <source>
    </source>
</evidence>
<evidence type="ECO:0000269" key="20">
    <source>
    </source>
</evidence>
<evidence type="ECO:0000269" key="21">
    <source>
    </source>
</evidence>
<evidence type="ECO:0000305" key="22"/>
<evidence type="ECO:0000305" key="23">
    <source>
    </source>
</evidence>
<evidence type="ECO:0000305" key="24">
    <source>
    </source>
</evidence>
<evidence type="ECO:0000305" key="25">
    <source>
    </source>
</evidence>
<evidence type="ECO:0000312" key="26">
    <source>
        <dbReference type="HGNC" id="HGNC:9475"/>
    </source>
</evidence>
<evidence type="ECO:0007829" key="27">
    <source>
        <dbReference type="PDB" id="1TRN"/>
    </source>
</evidence>
<evidence type="ECO:0007829" key="28">
    <source>
        <dbReference type="PDB" id="2RA3"/>
    </source>
</evidence>
<evidence type="ECO:0007829" key="29">
    <source>
        <dbReference type="PDB" id="7QE9"/>
    </source>
</evidence>
<reference key="1">
    <citation type="journal article" date="1986" name="Gene">
        <title>Cloning, characterization and nucleotide sequences of two cDNAs encoding human pancreatic trypsinogens.</title>
        <authorList>
            <person name="Emi M."/>
            <person name="Nakamura Y."/>
            <person name="Ogawa M."/>
            <person name="Yamamoto T."/>
            <person name="Nishide T."/>
            <person name="Mori T."/>
            <person name="Matsubara K."/>
        </authorList>
    </citation>
    <scope>NUCLEOTIDE SEQUENCE [MRNA]</scope>
</reference>
<reference key="2">
    <citation type="journal article" date="1996" name="Science">
        <title>The complete 685-kilobase DNA sequence of the human beta T cell receptor locus.</title>
        <authorList>
            <person name="Rowen L."/>
            <person name="Koop B.F."/>
            <person name="Hood L."/>
        </authorList>
    </citation>
    <scope>NUCLEOTIDE SEQUENCE [GENOMIC DNA]</scope>
</reference>
<reference key="3">
    <citation type="journal article" date="2004" name="Nat. Genet.">
        <title>Complete sequencing and characterization of 21,243 full-length human cDNAs.</title>
        <authorList>
            <person name="Ota T."/>
            <person name="Suzuki Y."/>
            <person name="Nishikawa T."/>
            <person name="Otsuki T."/>
            <person name="Sugiyama T."/>
            <person name="Irie R."/>
            <person name="Wakamatsu A."/>
            <person name="Hayashi K."/>
            <person name="Sato H."/>
            <person name="Nagai K."/>
            <person name="Kimura K."/>
            <person name="Makita H."/>
            <person name="Sekine M."/>
            <person name="Obayashi M."/>
            <person name="Nishi T."/>
            <person name="Shibahara T."/>
            <person name="Tanaka T."/>
            <person name="Ishii S."/>
            <person name="Yamamoto J."/>
            <person name="Saito K."/>
            <person name="Kawai Y."/>
            <person name="Isono Y."/>
            <person name="Nakamura Y."/>
            <person name="Nagahari K."/>
            <person name="Murakami K."/>
            <person name="Yasuda T."/>
            <person name="Iwayanagi T."/>
            <person name="Wagatsuma M."/>
            <person name="Shiratori A."/>
            <person name="Sudo H."/>
            <person name="Hosoiri T."/>
            <person name="Kaku Y."/>
            <person name="Kodaira H."/>
            <person name="Kondo H."/>
            <person name="Sugawara M."/>
            <person name="Takahashi M."/>
            <person name="Kanda K."/>
            <person name="Yokoi T."/>
            <person name="Furuya T."/>
            <person name="Kikkawa E."/>
            <person name="Omura Y."/>
            <person name="Abe K."/>
            <person name="Kamihara K."/>
            <person name="Katsuta N."/>
            <person name="Sato K."/>
            <person name="Tanikawa M."/>
            <person name="Yamazaki M."/>
            <person name="Ninomiya K."/>
            <person name="Ishibashi T."/>
            <person name="Yamashita H."/>
            <person name="Murakawa K."/>
            <person name="Fujimori K."/>
            <person name="Tanai H."/>
            <person name="Kimata M."/>
            <person name="Watanabe M."/>
            <person name="Hiraoka S."/>
            <person name="Chiba Y."/>
            <person name="Ishida S."/>
            <person name="Ono Y."/>
            <person name="Takiguchi S."/>
            <person name="Watanabe S."/>
            <person name="Yosida M."/>
            <person name="Hotuta T."/>
            <person name="Kusano J."/>
            <person name="Kanehori K."/>
            <person name="Takahashi-Fujii A."/>
            <person name="Hara H."/>
            <person name="Tanase T.-O."/>
            <person name="Nomura Y."/>
            <person name="Togiya S."/>
            <person name="Komai F."/>
            <person name="Hara R."/>
            <person name="Takeuchi K."/>
            <person name="Arita M."/>
            <person name="Imose N."/>
            <person name="Musashino K."/>
            <person name="Yuuki H."/>
            <person name="Oshima A."/>
            <person name="Sasaki N."/>
            <person name="Aotsuka S."/>
            <person name="Yoshikawa Y."/>
            <person name="Matsunawa H."/>
            <person name="Ichihara T."/>
            <person name="Shiohata N."/>
            <person name="Sano S."/>
            <person name="Moriya S."/>
            <person name="Momiyama H."/>
            <person name="Satoh N."/>
            <person name="Takami S."/>
            <person name="Terashima Y."/>
            <person name="Suzuki O."/>
            <person name="Nakagawa S."/>
            <person name="Senoh A."/>
            <person name="Mizoguchi H."/>
            <person name="Goto Y."/>
            <person name="Shimizu F."/>
            <person name="Wakebe H."/>
            <person name="Hishigaki H."/>
            <person name="Watanabe T."/>
            <person name="Sugiyama A."/>
            <person name="Takemoto M."/>
            <person name="Kawakami B."/>
            <person name="Yamazaki M."/>
            <person name="Watanabe K."/>
            <person name="Kumagai A."/>
            <person name="Itakura S."/>
            <person name="Fukuzumi Y."/>
            <person name="Fujimori Y."/>
            <person name="Komiyama M."/>
            <person name="Tashiro H."/>
            <person name="Tanigami A."/>
            <person name="Fujiwara T."/>
            <person name="Ono T."/>
            <person name="Yamada K."/>
            <person name="Fujii Y."/>
            <person name="Ozaki K."/>
            <person name="Hirao M."/>
            <person name="Ohmori Y."/>
            <person name="Kawabata A."/>
            <person name="Hikiji T."/>
            <person name="Kobatake N."/>
            <person name="Inagaki H."/>
            <person name="Ikema Y."/>
            <person name="Okamoto S."/>
            <person name="Okitani R."/>
            <person name="Kawakami T."/>
            <person name="Noguchi S."/>
            <person name="Itoh T."/>
            <person name="Shigeta K."/>
            <person name="Senba T."/>
            <person name="Matsumura K."/>
            <person name="Nakajima Y."/>
            <person name="Mizuno T."/>
            <person name="Morinaga M."/>
            <person name="Sasaki M."/>
            <person name="Togashi T."/>
            <person name="Oyama M."/>
            <person name="Hata H."/>
            <person name="Watanabe M."/>
            <person name="Komatsu T."/>
            <person name="Mizushima-Sugano J."/>
            <person name="Satoh T."/>
            <person name="Shirai Y."/>
            <person name="Takahashi Y."/>
            <person name="Nakagawa K."/>
            <person name="Okumura K."/>
            <person name="Nagase T."/>
            <person name="Nomura N."/>
            <person name="Kikuchi H."/>
            <person name="Masuho Y."/>
            <person name="Yamashita R."/>
            <person name="Nakai K."/>
            <person name="Yada T."/>
            <person name="Nakamura Y."/>
            <person name="Ohara O."/>
            <person name="Isogai T."/>
            <person name="Sugano S."/>
        </authorList>
    </citation>
    <scope>NUCLEOTIDE SEQUENCE [LARGE SCALE MRNA]</scope>
    <source>
        <tissue>Prostate</tissue>
    </source>
</reference>
<reference key="4">
    <citation type="journal article" date="2003" name="Nature">
        <title>The DNA sequence of human chromosome 7.</title>
        <authorList>
            <person name="Hillier L.W."/>
            <person name="Fulton R.S."/>
            <person name="Fulton L.A."/>
            <person name="Graves T.A."/>
            <person name="Pepin K.H."/>
            <person name="Wagner-McPherson C."/>
            <person name="Layman D."/>
            <person name="Maas J."/>
            <person name="Jaeger S."/>
            <person name="Walker R."/>
            <person name="Wylie K."/>
            <person name="Sekhon M."/>
            <person name="Becker M.C."/>
            <person name="O'Laughlin M.D."/>
            <person name="Schaller M.E."/>
            <person name="Fewell G.A."/>
            <person name="Delehaunty K.D."/>
            <person name="Miner T.L."/>
            <person name="Nash W.E."/>
            <person name="Cordes M."/>
            <person name="Du H."/>
            <person name="Sun H."/>
            <person name="Edwards J."/>
            <person name="Bradshaw-Cordum H."/>
            <person name="Ali J."/>
            <person name="Andrews S."/>
            <person name="Isak A."/>
            <person name="Vanbrunt A."/>
            <person name="Nguyen C."/>
            <person name="Du F."/>
            <person name="Lamar B."/>
            <person name="Courtney L."/>
            <person name="Kalicki J."/>
            <person name="Ozersky P."/>
            <person name="Bielicki L."/>
            <person name="Scott K."/>
            <person name="Holmes A."/>
            <person name="Harkins R."/>
            <person name="Harris A."/>
            <person name="Strong C.M."/>
            <person name="Hou S."/>
            <person name="Tomlinson C."/>
            <person name="Dauphin-Kohlberg S."/>
            <person name="Kozlowicz-Reilly A."/>
            <person name="Leonard S."/>
            <person name="Rohlfing T."/>
            <person name="Rock S.M."/>
            <person name="Tin-Wollam A.-M."/>
            <person name="Abbott A."/>
            <person name="Minx P."/>
            <person name="Maupin R."/>
            <person name="Strowmatt C."/>
            <person name="Latreille P."/>
            <person name="Miller N."/>
            <person name="Johnson D."/>
            <person name="Murray J."/>
            <person name="Woessner J.P."/>
            <person name="Wendl M.C."/>
            <person name="Yang S.-P."/>
            <person name="Schultz B.R."/>
            <person name="Wallis J.W."/>
            <person name="Spieth J."/>
            <person name="Bieri T.A."/>
            <person name="Nelson J.O."/>
            <person name="Berkowicz N."/>
            <person name="Wohldmann P.E."/>
            <person name="Cook L.L."/>
            <person name="Hickenbotham M.T."/>
            <person name="Eldred J."/>
            <person name="Williams D."/>
            <person name="Bedell J.A."/>
            <person name="Mardis E.R."/>
            <person name="Clifton S.W."/>
            <person name="Chissoe S.L."/>
            <person name="Marra M.A."/>
            <person name="Raymond C."/>
            <person name="Haugen E."/>
            <person name="Gillett W."/>
            <person name="Zhou Y."/>
            <person name="James R."/>
            <person name="Phelps K."/>
            <person name="Iadanoto S."/>
            <person name="Bubb K."/>
            <person name="Simms E."/>
            <person name="Levy R."/>
            <person name="Clendenning J."/>
            <person name="Kaul R."/>
            <person name="Kent W.J."/>
            <person name="Furey T.S."/>
            <person name="Baertsch R.A."/>
            <person name="Brent M.R."/>
            <person name="Keibler E."/>
            <person name="Flicek P."/>
            <person name="Bork P."/>
            <person name="Suyama M."/>
            <person name="Bailey J.A."/>
            <person name="Portnoy M.E."/>
            <person name="Torrents D."/>
            <person name="Chinwalla A.T."/>
            <person name="Gish W.R."/>
            <person name="Eddy S.R."/>
            <person name="McPherson J.D."/>
            <person name="Olson M.V."/>
            <person name="Eichler E.E."/>
            <person name="Green E.D."/>
            <person name="Waterston R.H."/>
            <person name="Wilson R.K."/>
        </authorList>
    </citation>
    <scope>NUCLEOTIDE SEQUENCE [LARGE SCALE GENOMIC DNA]</scope>
</reference>
<reference key="5">
    <citation type="journal article" date="2003" name="Science">
        <title>Human chromosome 7: DNA sequence and biology.</title>
        <authorList>
            <person name="Scherer S.W."/>
            <person name="Cheung J."/>
            <person name="MacDonald J.R."/>
            <person name="Osborne L.R."/>
            <person name="Nakabayashi K."/>
            <person name="Herbrick J.-A."/>
            <person name="Carson A.R."/>
            <person name="Parker-Katiraee L."/>
            <person name="Skaug J."/>
            <person name="Khaja R."/>
            <person name="Zhang J."/>
            <person name="Hudek A.K."/>
            <person name="Li M."/>
            <person name="Haddad M."/>
            <person name="Duggan G.E."/>
            <person name="Fernandez B.A."/>
            <person name="Kanematsu E."/>
            <person name="Gentles S."/>
            <person name="Christopoulos C.C."/>
            <person name="Choufani S."/>
            <person name="Kwasnicka D."/>
            <person name="Zheng X.H."/>
            <person name="Lai Z."/>
            <person name="Nusskern D.R."/>
            <person name="Zhang Q."/>
            <person name="Gu Z."/>
            <person name="Lu F."/>
            <person name="Zeesman S."/>
            <person name="Nowaczyk M.J."/>
            <person name="Teshima I."/>
            <person name="Chitayat D."/>
            <person name="Shuman C."/>
            <person name="Weksberg R."/>
            <person name="Zackai E.H."/>
            <person name="Grebe T.A."/>
            <person name="Cox S.R."/>
            <person name="Kirkpatrick S.J."/>
            <person name="Rahman N."/>
            <person name="Friedman J.M."/>
            <person name="Heng H.H.Q."/>
            <person name="Pelicci P.G."/>
            <person name="Lo-Coco F."/>
            <person name="Belloni E."/>
            <person name="Shaffer L.G."/>
            <person name="Pober B."/>
            <person name="Morton C.C."/>
            <person name="Gusella J.F."/>
            <person name="Bruns G.A.P."/>
            <person name="Korf B.R."/>
            <person name="Quade B.J."/>
            <person name="Ligon A.H."/>
            <person name="Ferguson H."/>
            <person name="Higgins A.W."/>
            <person name="Leach N.T."/>
            <person name="Herrick S.R."/>
            <person name="Lemyre E."/>
            <person name="Farra C.G."/>
            <person name="Kim H.-G."/>
            <person name="Summers A.M."/>
            <person name="Gripp K.W."/>
            <person name="Roberts W."/>
            <person name="Szatmari P."/>
            <person name="Winsor E.J.T."/>
            <person name="Grzeschik K.-H."/>
            <person name="Teebi A."/>
            <person name="Minassian B.A."/>
            <person name="Kere J."/>
            <person name="Armengol L."/>
            <person name="Pujana M.A."/>
            <person name="Estivill X."/>
            <person name="Wilson M.D."/>
            <person name="Koop B.F."/>
            <person name="Tosi S."/>
            <person name="Moore G.E."/>
            <person name="Boright A.P."/>
            <person name="Zlotorynski E."/>
            <person name="Kerem B."/>
            <person name="Kroisel P.M."/>
            <person name="Petek E."/>
            <person name="Oscier D.G."/>
            <person name="Mould S.J."/>
            <person name="Doehner H."/>
            <person name="Doehner K."/>
            <person name="Rommens J.M."/>
            <person name="Vincent J.B."/>
            <person name="Venter J.C."/>
            <person name="Li P.W."/>
            <person name="Mural R.J."/>
            <person name="Adams M.D."/>
            <person name="Tsui L.-C."/>
        </authorList>
    </citation>
    <scope>NUCLEOTIDE SEQUENCE [LARGE SCALE GENOMIC DNA]</scope>
</reference>
<reference key="6">
    <citation type="submission" date="2005-07" db="EMBL/GenBank/DDBJ databases">
        <authorList>
            <person name="Mural R.J."/>
            <person name="Istrail S."/>
            <person name="Sutton G.G."/>
            <person name="Florea L."/>
            <person name="Halpern A.L."/>
            <person name="Mobarry C.M."/>
            <person name="Lippert R."/>
            <person name="Walenz B."/>
            <person name="Shatkay H."/>
            <person name="Dew I."/>
            <person name="Miller J.R."/>
            <person name="Flanigan M.J."/>
            <person name="Edwards N.J."/>
            <person name="Bolanos R."/>
            <person name="Fasulo D."/>
            <person name="Halldorsson B.V."/>
            <person name="Hannenhalli S."/>
            <person name="Turner R."/>
            <person name="Yooseph S."/>
            <person name="Lu F."/>
            <person name="Nusskern D.R."/>
            <person name="Shue B.C."/>
            <person name="Zheng X.H."/>
            <person name="Zhong F."/>
            <person name="Delcher A.L."/>
            <person name="Huson D.H."/>
            <person name="Kravitz S.A."/>
            <person name="Mouchard L."/>
            <person name="Reinert K."/>
            <person name="Remington K.A."/>
            <person name="Clark A.G."/>
            <person name="Waterman M.S."/>
            <person name="Eichler E.E."/>
            <person name="Adams M.D."/>
            <person name="Hunkapiller M.W."/>
            <person name="Myers E.W."/>
            <person name="Venter J.C."/>
        </authorList>
    </citation>
    <scope>NUCLEOTIDE SEQUENCE [LARGE SCALE GENOMIC DNA]</scope>
</reference>
<reference key="7">
    <citation type="journal article" date="2004" name="Genome Res.">
        <title>The status, quality, and expansion of the NIH full-length cDNA project: the Mammalian Gene Collection (MGC).</title>
        <authorList>
            <consortium name="The MGC Project Team"/>
        </authorList>
    </citation>
    <scope>NUCLEOTIDE SEQUENCE [LARGE SCALE MRNA]</scope>
</reference>
<reference key="8">
    <citation type="journal article" date="2000" name="Gastroenterology">
        <title>Chronic pancreatitis associated with an activation peptide mutation that facilitates trypsin activation.</title>
        <authorList>
            <person name="Teich N."/>
            <person name="Ockenga J."/>
            <person name="Hoffmeister A."/>
            <person name="Manns M."/>
            <person name="Mossner J."/>
            <person name="Keim V."/>
        </authorList>
    </citation>
    <scope>NUCLEOTIDE SEQUENCE [GENOMIC DNA] OF 15-67</scope>
    <scope>VARIANT PCTT GLY-22</scope>
</reference>
<reference key="9">
    <citation type="journal article" date="1994" name="Biochem. J.">
        <title>Identification of one- and two-chain forms of trypsinogen 1 produced by a human gastric adenocarcinoma cell line.</title>
        <authorList>
            <person name="Koshikawa N."/>
            <person name="Yasumitsu H."/>
            <person name="Nagashima Y."/>
            <person name="Umeda M."/>
            <person name="Miyazaki K."/>
        </authorList>
    </citation>
    <scope>PROTEIN SEQUENCE OF 16-43 AND 123-142</scope>
    <scope>FUNCTION</scope>
    <scope>POST-TRANSLATIONAL PROCESSING</scope>
    <source>
        <tissue>Gastric adenocarcinoma</tissue>
    </source>
</reference>
<reference key="10">
    <citation type="journal article" date="1989" name="Clin. Chim. Acta">
        <title>Immunoreactive anionic and cationic trypsin in human serum.</title>
        <authorList>
            <person name="Kimland M."/>
            <person name="Russick C."/>
            <person name="Marks W.H."/>
            <person name="Borgstroem A."/>
        </authorList>
    </citation>
    <scope>PROTEIN SEQUENCE OF 16-43</scope>
</reference>
<reference key="11">
    <citation type="journal article" date="1996" name="Nat. Genet.">
        <title>Hereditary pancreatitis is caused by a mutation in the cationic trypsinogen gene.</title>
        <authorList>
            <person name="Whitcomb D.C."/>
            <person name="Gorry M.C."/>
            <person name="Preston R.A."/>
            <person name="Furey W."/>
            <person name="Sossenheimer M.J."/>
            <person name="Ulrich C.D."/>
            <person name="Martin S.P."/>
            <person name="Gates L.K. Jr."/>
            <person name="Amann S.T."/>
            <person name="Toskes P.P."/>
            <person name="Liddle R."/>
            <person name="McGrath K."/>
            <person name="Uomo G."/>
            <person name="Post J.C."/>
            <person name="Ehrlich G.D."/>
        </authorList>
    </citation>
    <scope>NUCLEOTIDE SEQUENCE [GENOMIC DNA] OF 68-151</scope>
    <scope>VARIANT PCTT HIS-122</scope>
</reference>
<reference key="12">
    <citation type="journal article" date="2002" name="Am. J. Gastroenterol.">
        <title>Mutational screening of patients with nonalcoholic chronic pancreatitis: identification of further trypsinogen variants.</title>
        <authorList>
            <person name="Teich N."/>
            <person name="Bauer N."/>
            <person name="Mossner J."/>
            <person name="Keim V."/>
        </authorList>
    </citation>
    <scope>NUCLEOTIDE SEQUENCE [GENOMIC DNA] OF 68-151</scope>
    <scope>VARIANTS PCTT ILE-29; PRO-104; CYS-116; HIS-122 AND PHE-139</scope>
</reference>
<reference key="13">
    <citation type="submission" date="2007-03" db="UniProtKB">
        <authorList>
            <person name="Lubec G."/>
            <person name="Afjehi-Sadat L."/>
        </authorList>
    </citation>
    <scope>PROTEIN SEQUENCE OF 73-92</scope>
    <scope>IDENTIFICATION BY MASS SPECTROMETRY</scope>
    <source>
        <tissue>Brain</tissue>
        <tissue>Cajal-Retzius cell</tissue>
    </source>
</reference>
<reference key="14">
    <citation type="journal article" date="2006" name="FEBS J.">
        <title>Human cationic trypsinogen is sulfated on Tyr154.</title>
        <authorList>
            <person name="Sahin-Toth M."/>
            <person name="Kukor Z."/>
            <person name="Nemoda Z."/>
        </authorList>
    </citation>
    <scope>SULFATION AT TYR-154</scope>
    <scope>MUTAGENESIS OF TYR-154</scope>
</reference>
<reference key="15">
    <citation type="journal article" date="2014" name="PLoS ONE">
        <title>Tyrosine sulfation of human trypsin steers S2' subsite selectivity towards basic amino acids.</title>
        <authorList>
            <person name="Szabo A."/>
            <person name="Salameh M.A."/>
            <person name="Ludwig M."/>
            <person name="Radisky E.S."/>
            <person name="Sahin-Toth M."/>
        </authorList>
    </citation>
    <scope>SULFATION AT TYR-154</scope>
</reference>
<reference key="16">
    <citation type="journal article" date="2000" name="Nature">
        <title>Structure of a serpin-protease complex shows inhibition by deformation.</title>
        <authorList>
            <person name="Huntington J.A."/>
            <person name="Read R.J."/>
            <person name="Carrell R.W."/>
        </authorList>
    </citation>
    <scope>INTERACTION WITH SERPINA1</scope>
</reference>
<reference key="17">
    <citation type="journal article" date="1996" name="J. Mol. Biol.">
        <title>Crystal structure of human trypsin 1: unexpected phosphorylation of Tyr151.</title>
        <authorList>
            <person name="Gaboriaud C."/>
            <person name="Serre L."/>
            <person name="Guy-Crotte O."/>
            <person name="Forest E."/>
            <person name="Fontecilla-Camps J.-C."/>
        </authorList>
    </citation>
    <scope>X-RAY CRYSTALLOGRAPHY (2.2 ANGSTROMS)</scope>
    <scope>MASS SPECTROMETRY</scope>
</reference>
<reference key="18">
    <citation type="journal article" date="1997" name="Gastroenterology">
        <title>Mutations in the cationic trypsinogen gene are associated with recurrent acute and chronic pancreatitis.</title>
        <authorList>
            <person name="Gorry M.C."/>
            <person name="Gabbaizedeh D."/>
            <person name="Furey W."/>
            <person name="Gates L.K. Jr."/>
            <person name="Preston R.A."/>
            <person name="Aston C.E."/>
            <person name="Zhang Y."/>
            <person name="Ulrich C."/>
            <person name="Ehrlich G.D."/>
            <person name="Whitcomb D.C."/>
        </authorList>
    </citation>
    <scope>VARIANTS PCTT ILE-29 AND HIS-122</scope>
</reference>
<reference key="19">
    <citation type="journal article" date="1998" name="Hum. Mutat.">
        <title>Mutations of the cationic trypsinogen in hereditary pancreatitis.</title>
        <authorList>
            <person name="Teich N."/>
            <person name="Mossner J."/>
            <person name="Keim V."/>
        </authorList>
    </citation>
    <scope>VARIANT PCTT ILE-29</scope>
</reference>
<reference key="20">
    <citation type="journal article" date="1999" name="Gastroenterology">
        <title>A signal peptide cleavage site mutation in the cationic trypsinogen gene is strongly associated with chronic pancreatitis.</title>
        <authorList>
            <person name="Witt H."/>
            <person name="Luck W."/>
            <person name="Becker M."/>
        </authorList>
    </citation>
    <scope>VARIANTS PCTT VAL-16 AND HIS-122</scope>
</reference>
<reference key="21">
    <citation type="journal article" date="1999" name="J. Med. Genet.">
        <title>Mutations in the cationic trypsinogen gene and evidence for genetic heterogeneity in hereditary pancreatitis.</title>
        <authorList>
            <person name="Ferec C."/>
            <person name="Raguenes O."/>
            <person name="Salomon R."/>
            <person name="Roche C."/>
            <person name="Bernard J.P."/>
            <person name="Guillot M."/>
            <person name="Quere I."/>
            <person name="Faure C."/>
            <person name="Mercier B."/>
            <person name="Audrezet M.-P."/>
            <person name="Guillausseau P.J."/>
            <person name="Dupont C."/>
            <person name="Munnich A."/>
            <person name="Bignon J.D."/>
            <person name="Le Bodic L."/>
        </authorList>
    </citation>
    <scope>VARIANT PCTT ARG-23</scope>
</reference>
<reference key="22">
    <citation type="journal article" date="2000" name="J. Med. Genet.">
        <title>A CGC&gt;CAT gene conversion-like event resulting in the R122H mutation in the cationic trypsinogen gene and its implication in the genotyping of pancreatitis.</title>
        <authorList>
            <person name="Chen J.-M."/>
            <person name="Raguenes O."/>
            <person name="Ferec C."/>
            <person name="Deprez P.H."/>
            <person name="Verellen-Dumoulin C."/>
        </authorList>
    </citation>
    <scope>VARIANT PCTT HIS-122</scope>
</reference>
<reference key="23">
    <citation type="journal article" date="2002" name="Gut">
        <title>Novel cationic trypsinogen (PRSS1) N29T and R122C mutations cause autosomal dominant hereditary pancreatitis.</title>
        <authorList>
            <person name="Pfutzer R."/>
            <person name="Myers E."/>
            <person name="Applebaum-Shapiro S."/>
            <person name="Finch R."/>
            <person name="Ellis I."/>
            <person name="Neoptolemos J."/>
            <person name="Kant J.A."/>
            <person name="Whitcomb D.C."/>
        </authorList>
    </citation>
    <scope>VARIANTS PCTT THR-29 AND CYS-122</scope>
</reference>
<reference key="24">
    <citation type="journal article" date="2004" name="Hum. Mutat.">
        <title>Interaction between trypsinogen isoforms in genetically determined pancreatitis: mutation E79K in cationic trypsin (PRSS1) causes increased transactivation of anionic trypsinogen (PRSS2).</title>
        <authorList>
            <person name="Teich N."/>
            <person name="Le Marechal C."/>
            <person name="Kukor Z."/>
            <person name="Caca K."/>
            <person name="Witzigmann H."/>
            <person name="Chen J.-M."/>
            <person name="Toth M."/>
            <person name="Moessner J."/>
            <person name="Keim V."/>
            <person name="Ferec C."/>
            <person name="Sahin-Toth M."/>
        </authorList>
    </citation>
    <scope>VARIANT PCTT LYS-79</scope>
    <scope>CHARACTERIZATION OF VARIANT PCTT LYS-79</scope>
</reference>
<reference key="25">
    <citation type="journal article" date="2005" name="Hum. Mutat.">
        <title>Gene conversion between functional trypsinogen genes PRSS1 and PRSS2 associated with chronic pancreatitis in a six-year-old girl.</title>
        <authorList>
            <person name="Teich N."/>
            <person name="Nemoda Z."/>
            <person name="Koehler H."/>
            <person name="Heinritz W."/>
            <person name="Moessner J."/>
            <person name="Keim V."/>
            <person name="Sahin-Toth M."/>
        </authorList>
    </citation>
    <scope>VARIANTS PCTT ILE-29 AND SER-54</scope>
    <scope>CHARACTERIZATION OF VARIANTS PCTT ILE-29 AND SER-54</scope>
</reference>
<reference key="26">
    <citation type="journal article" date="2006" name="Science">
        <title>The consensus coding sequences of human breast and colorectal cancers.</title>
        <authorList>
            <person name="Sjoeblom T."/>
            <person name="Jones S."/>
            <person name="Wood L.D."/>
            <person name="Parsons D.W."/>
            <person name="Lin J."/>
            <person name="Barber T.D."/>
            <person name="Mandelker D."/>
            <person name="Leary R.J."/>
            <person name="Ptak J."/>
            <person name="Silliman N."/>
            <person name="Szabo S."/>
            <person name="Buckhaults P."/>
            <person name="Farrell C."/>
            <person name="Meeh P."/>
            <person name="Markowitz S.D."/>
            <person name="Willis J."/>
            <person name="Dawson D."/>
            <person name="Willson J.K.V."/>
            <person name="Gazdar A.F."/>
            <person name="Hartigan J."/>
            <person name="Wu L."/>
            <person name="Liu C."/>
            <person name="Parmigiani G."/>
            <person name="Park B.H."/>
            <person name="Bachman K.E."/>
            <person name="Papadopoulos N."/>
            <person name="Vogelstein B."/>
            <person name="Kinzler K.W."/>
            <person name="Velculescu V.E."/>
        </authorList>
    </citation>
    <scope>VARIANT [LARGE SCALE ANALYSIS] MET-137</scope>
</reference>